<comment type="function">
    <text evidence="1">Catalyzes the attachment of alanine to tRNA(Ala) in a two-step reaction: alanine is first activated by ATP to form Ala-AMP and then transferred to the acceptor end of tRNA(Ala). Also edits incorrectly charged Ser-tRNA(Ala) and Gly-tRNA(Ala) via its editing domain.</text>
</comment>
<comment type="catalytic activity">
    <reaction evidence="1">
        <text>tRNA(Ala) + L-alanine + ATP = L-alanyl-tRNA(Ala) + AMP + diphosphate</text>
        <dbReference type="Rhea" id="RHEA:12540"/>
        <dbReference type="Rhea" id="RHEA-COMP:9657"/>
        <dbReference type="Rhea" id="RHEA-COMP:9923"/>
        <dbReference type="ChEBI" id="CHEBI:30616"/>
        <dbReference type="ChEBI" id="CHEBI:33019"/>
        <dbReference type="ChEBI" id="CHEBI:57972"/>
        <dbReference type="ChEBI" id="CHEBI:78442"/>
        <dbReference type="ChEBI" id="CHEBI:78497"/>
        <dbReference type="ChEBI" id="CHEBI:456215"/>
        <dbReference type="EC" id="6.1.1.7"/>
    </reaction>
</comment>
<comment type="cofactor">
    <cofactor evidence="1">
        <name>Zn(2+)</name>
        <dbReference type="ChEBI" id="CHEBI:29105"/>
    </cofactor>
    <text evidence="1">Binds 1 zinc ion per subunit.</text>
</comment>
<comment type="subcellular location">
    <subcellularLocation>
        <location evidence="1">Cytoplasm</location>
    </subcellularLocation>
</comment>
<comment type="domain">
    <text evidence="1">Consists of three domains; the N-terminal catalytic domain, the editing domain and the C-terminal C-Ala domain. The editing domain removes incorrectly charged amino acids, while the C-Ala domain, along with tRNA(Ala), serves as a bridge to cooperatively bring together the editing and aminoacylation centers thus stimulating deacylation of misacylated tRNAs.</text>
</comment>
<comment type="similarity">
    <text evidence="1">Belongs to the class-II aminoacyl-tRNA synthetase family.</text>
</comment>
<protein>
    <recommendedName>
        <fullName evidence="1">Alanine--tRNA ligase</fullName>
        <ecNumber evidence="1">6.1.1.7</ecNumber>
    </recommendedName>
    <alternativeName>
        <fullName evidence="1">Alanyl-tRNA synthetase</fullName>
        <shortName evidence="1">AlaRS</shortName>
    </alternativeName>
</protein>
<proteinExistence type="inferred from homology"/>
<evidence type="ECO:0000255" key="1">
    <source>
        <dbReference type="HAMAP-Rule" id="MF_00036"/>
    </source>
</evidence>
<gene>
    <name evidence="1" type="primary">alaS</name>
    <name type="ordered locus">SYNPCC7002_A1672</name>
</gene>
<sequence length="877" mass="96883">MSSVPPVLSGSEIRSKFLEFFNQRQHPILPSASLVPEDPTVLLTIAGMLPFKPIFLGQQDAPSPRATTSQKCIRTNDIENVGRTARHHTFFEMLGNFSFGDYFKEQAIAWAWELSTEVFQLDPKNIVVSVFREDDEAFEIWRDKVGVNPKRIIRMGEEDNFWKSGPTGPCGPCSELYYDFKPELGDDNIDLEDDTRFIEYYNLVFMQYNRDAEGHLTPLQNKNIDTGMGLERMAQILQQVPNNYETDLIFPIIETAAKAAGIHYEKADEKTKVSLKVIGDHVRSVVHMIADGITASNTDRGYVLRRLIRRVVRHGRLIGIDGNFINQVAETAIQLSEAAYPNTRERESFIKQELEREENNFLKTLERGEKLLADIIAKEEKQISGVDAFTLFDTFGFPFELTQEIAEENGLTVDAEGYQAEMKKQQERSKAAHETIDLTVQGSLDELAEHIHPTAFLGYTDLQSQVKIEAVLVDGHRVETAEAGVVVQLICNQTPFYAESGGQIGDRGYFSGDQLVVRINDVQKESGFFVHHGKVERGSLTVGDTVNATIDRACRRRAQANHTATHLLQAALKNIVDDSISQAGSLVDFDRLRFDFNCPRALTAAELTQIEAQINTWIAEAHEGQVAVMPIAEAKAKGAVAMFGEKYGEEVRVVDFPGVSMELCGGTHVKNTAEIGLFKIISETGISSGIRRIEAVAGPAVLEYLKVRDQVVKDLGDKFKAKPEEITERVENIQAELRNTQKELEKVKAELAIAKSEALVSQAETVGEFQILVENMGDLDAKALQTAAERLQQKLGEAAVVLGSTPEDGKVSLVAAFSEGIYKGKKVQAGKFIGGIAKLCGGGGGGRPNLAQAGGRDASKLPEALHTAKQQLRETLG</sequence>
<name>SYA_PICP2</name>
<accession>B1XP68</accession>
<dbReference type="EC" id="6.1.1.7" evidence="1"/>
<dbReference type="EMBL" id="CP000951">
    <property type="protein sequence ID" value="ACA99661.1"/>
    <property type="molecule type" value="Genomic_DNA"/>
</dbReference>
<dbReference type="RefSeq" id="WP_012307284.1">
    <property type="nucleotide sequence ID" value="NZ_JAHHPU010000002.1"/>
</dbReference>
<dbReference type="SMR" id="B1XP68"/>
<dbReference type="STRING" id="32049.SYNPCC7002_A1672"/>
<dbReference type="KEGG" id="syp:SYNPCC7002_A1672"/>
<dbReference type="eggNOG" id="COG0013">
    <property type="taxonomic scope" value="Bacteria"/>
</dbReference>
<dbReference type="HOGENOM" id="CLU_004485_1_1_3"/>
<dbReference type="Proteomes" id="UP000001688">
    <property type="component" value="Chromosome"/>
</dbReference>
<dbReference type="GO" id="GO:0005829">
    <property type="term" value="C:cytosol"/>
    <property type="evidence" value="ECO:0007669"/>
    <property type="project" value="TreeGrafter"/>
</dbReference>
<dbReference type="GO" id="GO:0004813">
    <property type="term" value="F:alanine-tRNA ligase activity"/>
    <property type="evidence" value="ECO:0007669"/>
    <property type="project" value="UniProtKB-UniRule"/>
</dbReference>
<dbReference type="GO" id="GO:0002161">
    <property type="term" value="F:aminoacyl-tRNA deacylase activity"/>
    <property type="evidence" value="ECO:0007669"/>
    <property type="project" value="TreeGrafter"/>
</dbReference>
<dbReference type="GO" id="GO:0005524">
    <property type="term" value="F:ATP binding"/>
    <property type="evidence" value="ECO:0007669"/>
    <property type="project" value="UniProtKB-UniRule"/>
</dbReference>
<dbReference type="GO" id="GO:0000049">
    <property type="term" value="F:tRNA binding"/>
    <property type="evidence" value="ECO:0007669"/>
    <property type="project" value="UniProtKB-KW"/>
</dbReference>
<dbReference type="GO" id="GO:0008270">
    <property type="term" value="F:zinc ion binding"/>
    <property type="evidence" value="ECO:0007669"/>
    <property type="project" value="UniProtKB-UniRule"/>
</dbReference>
<dbReference type="GO" id="GO:0006419">
    <property type="term" value="P:alanyl-tRNA aminoacylation"/>
    <property type="evidence" value="ECO:0007669"/>
    <property type="project" value="UniProtKB-UniRule"/>
</dbReference>
<dbReference type="CDD" id="cd00673">
    <property type="entry name" value="AlaRS_core"/>
    <property type="match status" value="1"/>
</dbReference>
<dbReference type="FunFam" id="2.40.30.130:FF:000001">
    <property type="entry name" value="Alanine--tRNA ligase"/>
    <property type="match status" value="1"/>
</dbReference>
<dbReference type="FunFam" id="3.10.310.40:FF:000001">
    <property type="entry name" value="Alanine--tRNA ligase"/>
    <property type="match status" value="1"/>
</dbReference>
<dbReference type="FunFam" id="3.30.54.20:FF:000001">
    <property type="entry name" value="Alanine--tRNA ligase"/>
    <property type="match status" value="1"/>
</dbReference>
<dbReference type="FunFam" id="3.30.930.10:FF:000004">
    <property type="entry name" value="Alanine--tRNA ligase"/>
    <property type="match status" value="1"/>
</dbReference>
<dbReference type="FunFam" id="3.30.980.10:FF:000004">
    <property type="entry name" value="Alanine--tRNA ligase, cytoplasmic"/>
    <property type="match status" value="1"/>
</dbReference>
<dbReference type="Gene3D" id="2.40.30.130">
    <property type="match status" value="1"/>
</dbReference>
<dbReference type="Gene3D" id="3.10.310.40">
    <property type="match status" value="1"/>
</dbReference>
<dbReference type="Gene3D" id="3.30.54.20">
    <property type="match status" value="1"/>
</dbReference>
<dbReference type="Gene3D" id="6.10.250.550">
    <property type="match status" value="1"/>
</dbReference>
<dbReference type="Gene3D" id="3.30.930.10">
    <property type="entry name" value="Bira Bifunctional Protein, Domain 2"/>
    <property type="match status" value="1"/>
</dbReference>
<dbReference type="Gene3D" id="3.30.980.10">
    <property type="entry name" value="Threonyl-trna Synthetase, Chain A, domain 2"/>
    <property type="match status" value="1"/>
</dbReference>
<dbReference type="HAMAP" id="MF_00036_B">
    <property type="entry name" value="Ala_tRNA_synth_B"/>
    <property type="match status" value="1"/>
</dbReference>
<dbReference type="InterPro" id="IPR045864">
    <property type="entry name" value="aa-tRNA-synth_II/BPL/LPL"/>
</dbReference>
<dbReference type="InterPro" id="IPR002318">
    <property type="entry name" value="Ala-tRNA-lgiase_IIc"/>
</dbReference>
<dbReference type="InterPro" id="IPR018162">
    <property type="entry name" value="Ala-tRNA-ligase_IIc_anticod-bd"/>
</dbReference>
<dbReference type="InterPro" id="IPR018165">
    <property type="entry name" value="Ala-tRNA-synth_IIc_core"/>
</dbReference>
<dbReference type="InterPro" id="IPR018164">
    <property type="entry name" value="Ala-tRNA-synth_IIc_N"/>
</dbReference>
<dbReference type="InterPro" id="IPR050058">
    <property type="entry name" value="Ala-tRNA_ligase"/>
</dbReference>
<dbReference type="InterPro" id="IPR023033">
    <property type="entry name" value="Ala_tRNA_ligase_euk/bac"/>
</dbReference>
<dbReference type="InterPro" id="IPR003156">
    <property type="entry name" value="DHHA1_dom"/>
</dbReference>
<dbReference type="InterPro" id="IPR018163">
    <property type="entry name" value="Thr/Ala-tRNA-synth_IIc_edit"/>
</dbReference>
<dbReference type="InterPro" id="IPR009000">
    <property type="entry name" value="Transl_B-barrel_sf"/>
</dbReference>
<dbReference type="InterPro" id="IPR012947">
    <property type="entry name" value="tRNA_SAD"/>
</dbReference>
<dbReference type="NCBIfam" id="TIGR00344">
    <property type="entry name" value="alaS"/>
    <property type="match status" value="1"/>
</dbReference>
<dbReference type="PANTHER" id="PTHR11777:SF9">
    <property type="entry name" value="ALANINE--TRNA LIGASE, CYTOPLASMIC"/>
    <property type="match status" value="1"/>
</dbReference>
<dbReference type="PANTHER" id="PTHR11777">
    <property type="entry name" value="ALANYL-TRNA SYNTHETASE"/>
    <property type="match status" value="1"/>
</dbReference>
<dbReference type="Pfam" id="PF02272">
    <property type="entry name" value="DHHA1"/>
    <property type="match status" value="1"/>
</dbReference>
<dbReference type="Pfam" id="PF01411">
    <property type="entry name" value="tRNA-synt_2c"/>
    <property type="match status" value="1"/>
</dbReference>
<dbReference type="Pfam" id="PF07973">
    <property type="entry name" value="tRNA_SAD"/>
    <property type="match status" value="1"/>
</dbReference>
<dbReference type="PRINTS" id="PR00980">
    <property type="entry name" value="TRNASYNTHALA"/>
</dbReference>
<dbReference type="SMART" id="SM00863">
    <property type="entry name" value="tRNA_SAD"/>
    <property type="match status" value="1"/>
</dbReference>
<dbReference type="SUPFAM" id="SSF55681">
    <property type="entry name" value="Class II aaRS and biotin synthetases"/>
    <property type="match status" value="1"/>
</dbReference>
<dbReference type="SUPFAM" id="SSF101353">
    <property type="entry name" value="Putative anticodon-binding domain of alanyl-tRNA synthetase (AlaRS)"/>
    <property type="match status" value="1"/>
</dbReference>
<dbReference type="SUPFAM" id="SSF55186">
    <property type="entry name" value="ThrRS/AlaRS common domain"/>
    <property type="match status" value="1"/>
</dbReference>
<dbReference type="SUPFAM" id="SSF50447">
    <property type="entry name" value="Translation proteins"/>
    <property type="match status" value="1"/>
</dbReference>
<dbReference type="PROSITE" id="PS50860">
    <property type="entry name" value="AA_TRNA_LIGASE_II_ALA"/>
    <property type="match status" value="1"/>
</dbReference>
<keyword id="KW-0030">Aminoacyl-tRNA synthetase</keyword>
<keyword id="KW-0067">ATP-binding</keyword>
<keyword id="KW-0963">Cytoplasm</keyword>
<keyword id="KW-0436">Ligase</keyword>
<keyword id="KW-0479">Metal-binding</keyword>
<keyword id="KW-0547">Nucleotide-binding</keyword>
<keyword id="KW-0648">Protein biosynthesis</keyword>
<keyword id="KW-1185">Reference proteome</keyword>
<keyword id="KW-0694">RNA-binding</keyword>
<keyword id="KW-0820">tRNA-binding</keyword>
<keyword id="KW-0862">Zinc</keyword>
<feature type="chain" id="PRO_0000347836" description="Alanine--tRNA ligase">
    <location>
        <begin position="1"/>
        <end position="877"/>
    </location>
</feature>
<feature type="binding site" evidence="1">
    <location>
        <position position="562"/>
    </location>
    <ligand>
        <name>Zn(2+)</name>
        <dbReference type="ChEBI" id="CHEBI:29105"/>
    </ligand>
</feature>
<feature type="binding site" evidence="1">
    <location>
        <position position="566"/>
    </location>
    <ligand>
        <name>Zn(2+)</name>
        <dbReference type="ChEBI" id="CHEBI:29105"/>
    </ligand>
</feature>
<feature type="binding site" evidence="1">
    <location>
        <position position="664"/>
    </location>
    <ligand>
        <name>Zn(2+)</name>
        <dbReference type="ChEBI" id="CHEBI:29105"/>
    </ligand>
</feature>
<feature type="binding site" evidence="1">
    <location>
        <position position="668"/>
    </location>
    <ligand>
        <name>Zn(2+)</name>
        <dbReference type="ChEBI" id="CHEBI:29105"/>
    </ligand>
</feature>
<organism>
    <name type="scientific">Picosynechococcus sp. (strain ATCC 27264 / PCC 7002 / PR-6)</name>
    <name type="common">Agmenellum quadruplicatum</name>
    <dbReference type="NCBI Taxonomy" id="32049"/>
    <lineage>
        <taxon>Bacteria</taxon>
        <taxon>Bacillati</taxon>
        <taxon>Cyanobacteriota</taxon>
        <taxon>Cyanophyceae</taxon>
        <taxon>Oscillatoriophycideae</taxon>
        <taxon>Chroococcales</taxon>
        <taxon>Geminocystaceae</taxon>
        <taxon>Picosynechococcus</taxon>
    </lineage>
</organism>
<reference key="1">
    <citation type="submission" date="2008-02" db="EMBL/GenBank/DDBJ databases">
        <title>Complete sequence of Synechococcus sp. PCC 7002.</title>
        <authorList>
            <person name="Li T."/>
            <person name="Zhao J."/>
            <person name="Zhao C."/>
            <person name="Liu Z."/>
            <person name="Zhao F."/>
            <person name="Marquardt J."/>
            <person name="Nomura C.T."/>
            <person name="Persson S."/>
            <person name="Detter J.C."/>
            <person name="Richardson P.M."/>
            <person name="Lanz C."/>
            <person name="Schuster S.C."/>
            <person name="Wang J."/>
            <person name="Li S."/>
            <person name="Huang X."/>
            <person name="Cai T."/>
            <person name="Yu Z."/>
            <person name="Luo J."/>
            <person name="Zhao J."/>
            <person name="Bryant D.A."/>
        </authorList>
    </citation>
    <scope>NUCLEOTIDE SEQUENCE [LARGE SCALE GENOMIC DNA]</scope>
    <source>
        <strain>ATCC 27264 / PCC 7002 / PR-6</strain>
    </source>
</reference>